<evidence type="ECO:0000250" key="1"/>
<evidence type="ECO:0000255" key="2"/>
<evidence type="ECO:0000269" key="3">
    <source>
    </source>
</evidence>
<evidence type="ECO:0000303" key="4">
    <source>
    </source>
</evidence>
<evidence type="ECO:0000305" key="5"/>
<evidence type="ECO:0000305" key="6">
    <source>
    </source>
</evidence>
<organism>
    <name type="scientific">Loxosceles intermedia</name>
    <name type="common">Brown spider</name>
    <dbReference type="NCBI Taxonomy" id="58218"/>
    <lineage>
        <taxon>Eukaryota</taxon>
        <taxon>Metazoa</taxon>
        <taxon>Ecdysozoa</taxon>
        <taxon>Arthropoda</taxon>
        <taxon>Chelicerata</taxon>
        <taxon>Arachnida</taxon>
        <taxon>Araneae</taxon>
        <taxon>Araneomorphae</taxon>
        <taxon>Haplogynae</taxon>
        <taxon>Scytodoidea</taxon>
        <taxon>Sicariidae</taxon>
        <taxon>Loxosceles</taxon>
    </lineage>
</organism>
<keyword id="KW-0027">Amidation</keyword>
<keyword id="KW-0165">Cleavage on pair of basic residues</keyword>
<keyword id="KW-0903">Direct protein sequencing</keyword>
<keyword id="KW-1015">Disulfide bond</keyword>
<keyword id="KW-0872">Ion channel impairing toxin</keyword>
<keyword id="KW-0960">Knottin</keyword>
<keyword id="KW-0528">Neurotoxin</keyword>
<keyword id="KW-0964">Secreted</keyword>
<keyword id="KW-0732">Signal</keyword>
<keyword id="KW-0800">Toxin</keyword>
<protein>
    <recommendedName>
        <fullName>U1-sicaritoxin-Li1a</fullName>
        <shortName>U1-SCRTX-Li1a</shortName>
    </recommendedName>
    <alternativeName>
        <fullName evidence="4">LiTx1</fullName>
    </alternativeName>
</protein>
<sequence>MRFLVGAVLVVVLVACATAFESDAETFKSLVVEERKCHGDGSKGCATKPDDWCCKNTPCKCPAWSSTSECRCAMDCSRRCKGKRALLLPVETHRLLFPEQW</sequence>
<accession>Q6B4T5</accession>
<comment type="function">
    <text>Toxin active against insects (S.frugiperda larvae). May act on sodium (Nav) or calcium channels (Cav).</text>
</comment>
<comment type="subcellular location">
    <subcellularLocation>
        <location evidence="3">Secreted</location>
    </subcellularLocation>
</comment>
<comment type="tissue specificity">
    <text evidence="6">Expressed by the venom gland.</text>
</comment>
<comment type="domain">
    <text evidence="1">The presence of a 'disulfide through disulfide knot' structurally defines this protein as a knottin.</text>
</comment>
<comment type="similarity">
    <text evidence="5">Belongs to the neurotoxin 28 (Litx) family.</text>
</comment>
<proteinExistence type="evidence at protein level"/>
<feature type="signal peptide" evidence="2">
    <location>
        <begin position="1"/>
        <end position="19"/>
    </location>
</feature>
<feature type="propeptide" id="PRO_0000262655" evidence="3">
    <location>
        <begin position="20"/>
        <end position="35"/>
    </location>
</feature>
<feature type="chain" id="PRO_0000262656" description="U1-sicaritoxin-Li1a">
    <location>
        <begin position="36"/>
        <end position="81"/>
    </location>
</feature>
<feature type="propeptide" id="PRO_0000262657">
    <location>
        <begin position="85"/>
        <end position="101"/>
    </location>
</feature>
<feature type="modified residue" description="Lysine amide" evidence="2">
    <location>
        <position position="81"/>
    </location>
</feature>
<feature type="disulfide bond" evidence="1">
    <location>
        <begin position="37"/>
        <end position="54"/>
    </location>
</feature>
<feature type="disulfide bond" evidence="1">
    <location>
        <begin position="45"/>
        <end position="59"/>
    </location>
</feature>
<feature type="disulfide bond" evidence="1">
    <location>
        <begin position="53"/>
        <end position="72"/>
    </location>
</feature>
<feature type="disulfide bond" evidence="1">
    <location>
        <begin position="61"/>
        <end position="70"/>
    </location>
</feature>
<feature type="sequence conflict" description="In Ref. 1; AA sequence." evidence="5" ref="1">
    <original>C</original>
    <variation>G</variation>
    <location>
        <position position="45"/>
    </location>
</feature>
<dbReference type="EMBL" id="AY681975">
    <property type="protein sequence ID" value="AAT85610.1"/>
    <property type="molecule type" value="mRNA"/>
</dbReference>
<dbReference type="SMR" id="Q6B4T5"/>
<dbReference type="ArachnoServer" id="AS000225">
    <property type="toxin name" value="U1-sicaritoxin-Li1a"/>
</dbReference>
<dbReference type="GO" id="GO:0005576">
    <property type="term" value="C:extracellular region"/>
    <property type="evidence" value="ECO:0007669"/>
    <property type="project" value="UniProtKB-SubCell"/>
</dbReference>
<dbReference type="GO" id="GO:0099106">
    <property type="term" value="F:ion channel regulator activity"/>
    <property type="evidence" value="ECO:0007669"/>
    <property type="project" value="UniProtKB-KW"/>
</dbReference>
<dbReference type="GO" id="GO:0090729">
    <property type="term" value="F:toxin activity"/>
    <property type="evidence" value="ECO:0007669"/>
    <property type="project" value="UniProtKB-KW"/>
</dbReference>
<name>TX1_LOXIN</name>
<reference key="1">
    <citation type="journal article" date="2004" name="Toxicon">
        <title>Identification and molecular cloning of insecticidal toxins from the venom of the brown spider Loxosceles intermedia.</title>
        <authorList>
            <person name="de Castro C.S."/>
            <person name="Silvestre F.G."/>
            <person name="Araujo S.C."/>
            <person name="Yazbeck G.M."/>
            <person name="Mangili O.C."/>
            <person name="Cruz I."/>
            <person name="Chavez-Olortegui C."/>
            <person name="Kalapothakis E."/>
        </authorList>
    </citation>
    <scope>NUCLEOTIDE SEQUENCE [MRNA]</scope>
    <scope>PROTEIN SEQUENCE OF 36-51</scope>
    <scope>SUBCELLULAR LOCATION</scope>
    <source>
        <tissue>Venom</tissue>
        <tissue>Venom gland</tissue>
    </source>
</reference>